<keyword id="KW-0963">Cytoplasm</keyword>
<keyword id="KW-0489">Methyltransferase</keyword>
<keyword id="KW-0694">RNA-binding</keyword>
<keyword id="KW-0698">rRNA processing</keyword>
<keyword id="KW-0949">S-adenosyl-L-methionine</keyword>
<keyword id="KW-0808">Transferase</keyword>
<gene>
    <name evidence="1" type="primary">rsmA</name>
    <name evidence="1" type="synonym">ksgA</name>
    <name type="ordered locus">CLD_0706</name>
</gene>
<feature type="chain" id="PRO_1000212240" description="Ribosomal RNA small subunit methyltransferase A">
    <location>
        <begin position="1"/>
        <end position="275"/>
    </location>
</feature>
<feature type="binding site" evidence="1">
    <location>
        <position position="21"/>
    </location>
    <ligand>
        <name>S-adenosyl-L-methionine</name>
        <dbReference type="ChEBI" id="CHEBI:59789"/>
    </ligand>
</feature>
<feature type="binding site" evidence="1">
    <location>
        <position position="23"/>
    </location>
    <ligand>
        <name>S-adenosyl-L-methionine</name>
        <dbReference type="ChEBI" id="CHEBI:59789"/>
    </ligand>
</feature>
<feature type="binding site" evidence="1">
    <location>
        <position position="48"/>
    </location>
    <ligand>
        <name>S-adenosyl-L-methionine</name>
        <dbReference type="ChEBI" id="CHEBI:59789"/>
    </ligand>
</feature>
<feature type="binding site" evidence="1">
    <location>
        <position position="69"/>
    </location>
    <ligand>
        <name>S-adenosyl-L-methionine</name>
        <dbReference type="ChEBI" id="CHEBI:59789"/>
    </ligand>
</feature>
<feature type="binding site" evidence="1">
    <location>
        <position position="94"/>
    </location>
    <ligand>
        <name>S-adenosyl-L-methionine</name>
        <dbReference type="ChEBI" id="CHEBI:59789"/>
    </ligand>
</feature>
<feature type="binding site" evidence="1">
    <location>
        <position position="115"/>
    </location>
    <ligand>
        <name>S-adenosyl-L-methionine</name>
        <dbReference type="ChEBI" id="CHEBI:59789"/>
    </ligand>
</feature>
<evidence type="ECO:0000255" key="1">
    <source>
        <dbReference type="HAMAP-Rule" id="MF_00607"/>
    </source>
</evidence>
<organism>
    <name type="scientific">Clostridium botulinum (strain Okra / Type B1)</name>
    <dbReference type="NCBI Taxonomy" id="498213"/>
    <lineage>
        <taxon>Bacteria</taxon>
        <taxon>Bacillati</taxon>
        <taxon>Bacillota</taxon>
        <taxon>Clostridia</taxon>
        <taxon>Eubacteriales</taxon>
        <taxon>Clostridiaceae</taxon>
        <taxon>Clostridium</taxon>
    </lineage>
</organism>
<protein>
    <recommendedName>
        <fullName evidence="1">Ribosomal RNA small subunit methyltransferase A</fullName>
        <ecNumber evidence="1">2.1.1.182</ecNumber>
    </recommendedName>
    <alternativeName>
        <fullName evidence="1">16S rRNA (adenine(1518)-N(6)/adenine(1519)-N(6))-dimethyltransferase</fullName>
    </alternativeName>
    <alternativeName>
        <fullName evidence="1">16S rRNA dimethyladenosine transferase</fullName>
    </alternativeName>
    <alternativeName>
        <fullName evidence="1">16S rRNA dimethylase</fullName>
    </alternativeName>
    <alternativeName>
        <fullName evidence="1">S-adenosylmethionine-6-N', N'-adenosyl(rRNA) dimethyltransferase</fullName>
    </alternativeName>
</protein>
<reference key="1">
    <citation type="journal article" date="2007" name="PLoS ONE">
        <title>Analysis of the neurotoxin complex genes in Clostridium botulinum A1-A4 and B1 strains: BoNT/A3, /Ba4 and /B1 clusters are located within plasmids.</title>
        <authorList>
            <person name="Smith T.J."/>
            <person name="Hill K.K."/>
            <person name="Foley B.T."/>
            <person name="Detter J.C."/>
            <person name="Munk A.C."/>
            <person name="Bruce D.C."/>
            <person name="Doggett N.A."/>
            <person name="Smith L.A."/>
            <person name="Marks J.D."/>
            <person name="Xie G."/>
            <person name="Brettin T.S."/>
        </authorList>
    </citation>
    <scope>NUCLEOTIDE SEQUENCE [LARGE SCALE GENOMIC DNA]</scope>
    <source>
        <strain>Okra / Type B1</strain>
    </source>
</reference>
<proteinExistence type="inferred from homology"/>
<sequence>MNTKEIVNKYEFKFNKNLGQNFLIDESVLEDIIEGAEISKEDTVIEIGPGVGTLTKELLERAKEVYSIELDGDLIPILQEELKEYNNFTLIHKDALKINFNELMENKDSIKLVANLPYYVTTPIISRLLTEKCDFKSLTIMIQKEVAERINAEPNCKEYGSLTVLVQYYCNTKIIRKVSPNSFIPKPKVDSIVIKLDRLSEPRVRVKSQKLFFNVVRSSFNMRRKTLWNSLKSLNIDKESMENAFERAGIDPKRRGETLSIEEFGKLSDCIYDIL</sequence>
<accession>B1ID54</accession>
<name>RSMA_CLOBK</name>
<comment type="function">
    <text evidence="1">Specifically dimethylates two adjacent adenosines (A1518 and A1519) in the loop of a conserved hairpin near the 3'-end of 16S rRNA in the 30S particle. May play a critical role in biogenesis of 30S subunits.</text>
</comment>
<comment type="catalytic activity">
    <reaction evidence="1">
        <text>adenosine(1518)/adenosine(1519) in 16S rRNA + 4 S-adenosyl-L-methionine = N(6)-dimethyladenosine(1518)/N(6)-dimethyladenosine(1519) in 16S rRNA + 4 S-adenosyl-L-homocysteine + 4 H(+)</text>
        <dbReference type="Rhea" id="RHEA:19609"/>
        <dbReference type="Rhea" id="RHEA-COMP:10232"/>
        <dbReference type="Rhea" id="RHEA-COMP:10233"/>
        <dbReference type="ChEBI" id="CHEBI:15378"/>
        <dbReference type="ChEBI" id="CHEBI:57856"/>
        <dbReference type="ChEBI" id="CHEBI:59789"/>
        <dbReference type="ChEBI" id="CHEBI:74411"/>
        <dbReference type="ChEBI" id="CHEBI:74493"/>
        <dbReference type="EC" id="2.1.1.182"/>
    </reaction>
</comment>
<comment type="subcellular location">
    <subcellularLocation>
        <location evidence="1">Cytoplasm</location>
    </subcellularLocation>
</comment>
<comment type="similarity">
    <text evidence="1">Belongs to the class I-like SAM-binding methyltransferase superfamily. rRNA adenine N(6)-methyltransferase family. RsmA subfamily.</text>
</comment>
<dbReference type="EC" id="2.1.1.182" evidence="1"/>
<dbReference type="EMBL" id="CP000939">
    <property type="protein sequence ID" value="ACA44243.1"/>
    <property type="molecule type" value="Genomic_DNA"/>
</dbReference>
<dbReference type="RefSeq" id="WP_015957603.1">
    <property type="nucleotide sequence ID" value="NC_010516.1"/>
</dbReference>
<dbReference type="SMR" id="B1ID54"/>
<dbReference type="KEGG" id="cbb:CLD_0706"/>
<dbReference type="HOGENOM" id="CLU_041220_0_0_9"/>
<dbReference type="Proteomes" id="UP000008541">
    <property type="component" value="Chromosome"/>
</dbReference>
<dbReference type="GO" id="GO:0005829">
    <property type="term" value="C:cytosol"/>
    <property type="evidence" value="ECO:0007669"/>
    <property type="project" value="TreeGrafter"/>
</dbReference>
<dbReference type="GO" id="GO:0052908">
    <property type="term" value="F:16S rRNA (adenine(1518)-N(6)/adenine(1519)-N(6))-dimethyltransferase activity"/>
    <property type="evidence" value="ECO:0007669"/>
    <property type="project" value="UniProtKB-EC"/>
</dbReference>
<dbReference type="GO" id="GO:0003723">
    <property type="term" value="F:RNA binding"/>
    <property type="evidence" value="ECO:0007669"/>
    <property type="project" value="UniProtKB-KW"/>
</dbReference>
<dbReference type="CDD" id="cd02440">
    <property type="entry name" value="AdoMet_MTases"/>
    <property type="match status" value="1"/>
</dbReference>
<dbReference type="FunFam" id="1.10.8.100:FF:000001">
    <property type="entry name" value="Ribosomal RNA small subunit methyltransferase A"/>
    <property type="match status" value="1"/>
</dbReference>
<dbReference type="FunFam" id="3.40.50.150:FF:000023">
    <property type="entry name" value="Ribosomal RNA small subunit methyltransferase A"/>
    <property type="match status" value="1"/>
</dbReference>
<dbReference type="Gene3D" id="1.10.8.100">
    <property type="entry name" value="Ribosomal RNA adenine dimethylase-like, domain 2"/>
    <property type="match status" value="1"/>
</dbReference>
<dbReference type="Gene3D" id="3.40.50.150">
    <property type="entry name" value="Vaccinia Virus protein VP39"/>
    <property type="match status" value="1"/>
</dbReference>
<dbReference type="HAMAP" id="MF_00607">
    <property type="entry name" value="16SrRNA_methyltr_A"/>
    <property type="match status" value="1"/>
</dbReference>
<dbReference type="InterPro" id="IPR001737">
    <property type="entry name" value="KsgA/Erm"/>
</dbReference>
<dbReference type="InterPro" id="IPR023165">
    <property type="entry name" value="rRNA_Ade_diMease-like_C"/>
</dbReference>
<dbReference type="InterPro" id="IPR020596">
    <property type="entry name" value="rRNA_Ade_Mease_Trfase_CS"/>
</dbReference>
<dbReference type="InterPro" id="IPR020598">
    <property type="entry name" value="rRNA_Ade_methylase_Trfase_N"/>
</dbReference>
<dbReference type="InterPro" id="IPR011530">
    <property type="entry name" value="rRNA_adenine_dimethylase"/>
</dbReference>
<dbReference type="InterPro" id="IPR029063">
    <property type="entry name" value="SAM-dependent_MTases_sf"/>
</dbReference>
<dbReference type="NCBIfam" id="TIGR00755">
    <property type="entry name" value="ksgA"/>
    <property type="match status" value="1"/>
</dbReference>
<dbReference type="PANTHER" id="PTHR11727">
    <property type="entry name" value="DIMETHYLADENOSINE TRANSFERASE"/>
    <property type="match status" value="1"/>
</dbReference>
<dbReference type="PANTHER" id="PTHR11727:SF7">
    <property type="entry name" value="DIMETHYLADENOSINE TRANSFERASE-RELATED"/>
    <property type="match status" value="1"/>
</dbReference>
<dbReference type="Pfam" id="PF00398">
    <property type="entry name" value="RrnaAD"/>
    <property type="match status" value="1"/>
</dbReference>
<dbReference type="SMART" id="SM00650">
    <property type="entry name" value="rADc"/>
    <property type="match status" value="1"/>
</dbReference>
<dbReference type="SUPFAM" id="SSF53335">
    <property type="entry name" value="S-adenosyl-L-methionine-dependent methyltransferases"/>
    <property type="match status" value="1"/>
</dbReference>
<dbReference type="PROSITE" id="PS01131">
    <property type="entry name" value="RRNA_A_DIMETH"/>
    <property type="match status" value="1"/>
</dbReference>
<dbReference type="PROSITE" id="PS51689">
    <property type="entry name" value="SAM_RNA_A_N6_MT"/>
    <property type="match status" value="1"/>
</dbReference>